<organism>
    <name type="scientific">Azotobacter vinelandii (strain DJ / ATCC BAA-1303)</name>
    <dbReference type="NCBI Taxonomy" id="322710"/>
    <lineage>
        <taxon>Bacteria</taxon>
        <taxon>Pseudomonadati</taxon>
        <taxon>Pseudomonadota</taxon>
        <taxon>Gammaproteobacteria</taxon>
        <taxon>Pseudomonadales</taxon>
        <taxon>Pseudomonadaceae</taxon>
        <taxon>Azotobacter</taxon>
    </lineage>
</organism>
<keyword id="KW-0479">Metal-binding</keyword>
<keyword id="KW-0560">Oxidoreductase</keyword>
<keyword id="KW-0862">Zinc</keyword>
<feature type="chain" id="PRO_1000215170" description="Peptide methionine sulfoxide reductase MsrB">
    <location>
        <begin position="1"/>
        <end position="133"/>
    </location>
</feature>
<feature type="domain" description="MsrB" evidence="2">
    <location>
        <begin position="8"/>
        <end position="130"/>
    </location>
</feature>
<feature type="active site" description="Nucleophile" evidence="2">
    <location>
        <position position="119"/>
    </location>
</feature>
<feature type="binding site" evidence="2">
    <location>
        <position position="47"/>
    </location>
    <ligand>
        <name>Zn(2+)</name>
        <dbReference type="ChEBI" id="CHEBI:29105"/>
    </ligand>
</feature>
<feature type="binding site" evidence="2">
    <location>
        <position position="50"/>
    </location>
    <ligand>
        <name>Zn(2+)</name>
        <dbReference type="ChEBI" id="CHEBI:29105"/>
    </ligand>
</feature>
<feature type="binding site" evidence="2">
    <location>
        <position position="96"/>
    </location>
    <ligand>
        <name>Zn(2+)</name>
        <dbReference type="ChEBI" id="CHEBI:29105"/>
    </ligand>
</feature>
<feature type="binding site" evidence="2">
    <location>
        <position position="99"/>
    </location>
    <ligand>
        <name>Zn(2+)</name>
        <dbReference type="ChEBI" id="CHEBI:29105"/>
    </ligand>
</feature>
<gene>
    <name evidence="1" type="primary">msrB</name>
    <name type="ordered locus">Avin_15440</name>
</gene>
<sequence length="133" mass="14809">MDKLEKSLDVWRELLSDERFRICRLGGTERAFSGEYYATSVPGVYHCACCDAPLFDSDAKYDAGCGWPSYFQPVAASALTSRDDYSHGMHRIEVLCARCDAHLGHVFPDGPPPTGLRYCINSASLRLKPRDEG</sequence>
<evidence type="ECO:0000255" key="1">
    <source>
        <dbReference type="HAMAP-Rule" id="MF_01400"/>
    </source>
</evidence>
<evidence type="ECO:0000255" key="2">
    <source>
        <dbReference type="PROSITE-ProRule" id="PRU01126"/>
    </source>
</evidence>
<comment type="catalytic activity">
    <reaction evidence="1">
        <text>L-methionyl-[protein] + [thioredoxin]-disulfide + H2O = L-methionyl-(R)-S-oxide-[protein] + [thioredoxin]-dithiol</text>
        <dbReference type="Rhea" id="RHEA:24164"/>
        <dbReference type="Rhea" id="RHEA-COMP:10698"/>
        <dbReference type="Rhea" id="RHEA-COMP:10700"/>
        <dbReference type="Rhea" id="RHEA-COMP:12313"/>
        <dbReference type="Rhea" id="RHEA-COMP:12314"/>
        <dbReference type="ChEBI" id="CHEBI:15377"/>
        <dbReference type="ChEBI" id="CHEBI:16044"/>
        <dbReference type="ChEBI" id="CHEBI:29950"/>
        <dbReference type="ChEBI" id="CHEBI:45764"/>
        <dbReference type="ChEBI" id="CHEBI:50058"/>
        <dbReference type="EC" id="1.8.4.12"/>
    </reaction>
</comment>
<comment type="cofactor">
    <cofactor evidence="1">
        <name>Zn(2+)</name>
        <dbReference type="ChEBI" id="CHEBI:29105"/>
    </cofactor>
    <text evidence="1">Binds 1 zinc ion per subunit. The zinc ion is important for the structural integrity of the protein.</text>
</comment>
<comment type="similarity">
    <text evidence="1">Belongs to the MsrB Met sulfoxide reductase family.</text>
</comment>
<protein>
    <recommendedName>
        <fullName evidence="1">Peptide methionine sulfoxide reductase MsrB</fullName>
        <ecNumber evidence="1">1.8.4.12</ecNumber>
    </recommendedName>
    <alternativeName>
        <fullName evidence="1">Peptide-methionine (R)-S-oxide reductase</fullName>
    </alternativeName>
</protein>
<reference key="1">
    <citation type="journal article" date="2009" name="J. Bacteriol.">
        <title>Genome sequence of Azotobacter vinelandii, an obligate aerobe specialized to support diverse anaerobic metabolic processes.</title>
        <authorList>
            <person name="Setubal J.C."/>
            <person name="Dos Santos P."/>
            <person name="Goldman B.S."/>
            <person name="Ertesvaag H."/>
            <person name="Espin G."/>
            <person name="Rubio L.M."/>
            <person name="Valla S."/>
            <person name="Almeida N.F."/>
            <person name="Balasubramanian D."/>
            <person name="Cromes L."/>
            <person name="Curatti L."/>
            <person name="Du Z."/>
            <person name="Godsy E."/>
            <person name="Goodner B."/>
            <person name="Hellner-Burris K."/>
            <person name="Hernandez J.A."/>
            <person name="Houmiel K."/>
            <person name="Imperial J."/>
            <person name="Kennedy C."/>
            <person name="Larson T.J."/>
            <person name="Latreille P."/>
            <person name="Ligon L.S."/>
            <person name="Lu J."/>
            <person name="Maerk M."/>
            <person name="Miller N.M."/>
            <person name="Norton S."/>
            <person name="O'Carroll I.P."/>
            <person name="Paulsen I."/>
            <person name="Raulfs E.C."/>
            <person name="Roemer R."/>
            <person name="Rosser J."/>
            <person name="Segura D."/>
            <person name="Slater S."/>
            <person name="Stricklin S.L."/>
            <person name="Studholme D.J."/>
            <person name="Sun J."/>
            <person name="Viana C.J."/>
            <person name="Wallin E."/>
            <person name="Wang B."/>
            <person name="Wheeler C."/>
            <person name="Zhu H."/>
            <person name="Dean D.R."/>
            <person name="Dixon R."/>
            <person name="Wood D."/>
        </authorList>
    </citation>
    <scope>NUCLEOTIDE SEQUENCE [LARGE SCALE GENOMIC DNA]</scope>
    <source>
        <strain>DJ / ATCC BAA-1303</strain>
    </source>
</reference>
<accession>C1DRM1</accession>
<dbReference type="EC" id="1.8.4.12" evidence="1"/>
<dbReference type="EMBL" id="CP001157">
    <property type="protein sequence ID" value="ACO77759.1"/>
    <property type="molecule type" value="Genomic_DNA"/>
</dbReference>
<dbReference type="RefSeq" id="WP_012700175.1">
    <property type="nucleotide sequence ID" value="NC_012560.1"/>
</dbReference>
<dbReference type="SMR" id="C1DRM1"/>
<dbReference type="STRING" id="322710.Avin_15440"/>
<dbReference type="EnsemblBacteria" id="ACO77759">
    <property type="protein sequence ID" value="ACO77759"/>
    <property type="gene ID" value="Avin_15440"/>
</dbReference>
<dbReference type="GeneID" id="88184833"/>
<dbReference type="KEGG" id="avn:Avin_15440"/>
<dbReference type="eggNOG" id="COG0229">
    <property type="taxonomic scope" value="Bacteria"/>
</dbReference>
<dbReference type="HOGENOM" id="CLU_031040_8_5_6"/>
<dbReference type="OrthoDB" id="9785497at2"/>
<dbReference type="Proteomes" id="UP000002424">
    <property type="component" value="Chromosome"/>
</dbReference>
<dbReference type="GO" id="GO:0005737">
    <property type="term" value="C:cytoplasm"/>
    <property type="evidence" value="ECO:0007669"/>
    <property type="project" value="TreeGrafter"/>
</dbReference>
<dbReference type="GO" id="GO:0033743">
    <property type="term" value="F:peptide-methionine (R)-S-oxide reductase activity"/>
    <property type="evidence" value="ECO:0007669"/>
    <property type="project" value="UniProtKB-UniRule"/>
</dbReference>
<dbReference type="GO" id="GO:0008270">
    <property type="term" value="F:zinc ion binding"/>
    <property type="evidence" value="ECO:0007669"/>
    <property type="project" value="UniProtKB-UniRule"/>
</dbReference>
<dbReference type="GO" id="GO:0030091">
    <property type="term" value="P:protein repair"/>
    <property type="evidence" value="ECO:0007669"/>
    <property type="project" value="InterPro"/>
</dbReference>
<dbReference type="GO" id="GO:0006979">
    <property type="term" value="P:response to oxidative stress"/>
    <property type="evidence" value="ECO:0007669"/>
    <property type="project" value="InterPro"/>
</dbReference>
<dbReference type="FunFam" id="2.170.150.20:FF:000001">
    <property type="entry name" value="Peptide methionine sulfoxide reductase MsrB"/>
    <property type="match status" value="1"/>
</dbReference>
<dbReference type="Gene3D" id="2.170.150.20">
    <property type="entry name" value="Peptide methionine sulfoxide reductase"/>
    <property type="match status" value="1"/>
</dbReference>
<dbReference type="HAMAP" id="MF_01400">
    <property type="entry name" value="MsrB"/>
    <property type="match status" value="1"/>
</dbReference>
<dbReference type="InterPro" id="IPR028427">
    <property type="entry name" value="Met_Sox_Rdtase_MsrB"/>
</dbReference>
<dbReference type="InterPro" id="IPR002579">
    <property type="entry name" value="Met_Sox_Rdtase_MsrB_dom"/>
</dbReference>
<dbReference type="InterPro" id="IPR011057">
    <property type="entry name" value="Mss4-like_sf"/>
</dbReference>
<dbReference type="NCBIfam" id="TIGR00357">
    <property type="entry name" value="peptide-methionine (R)-S-oxide reductase MsrB"/>
    <property type="match status" value="1"/>
</dbReference>
<dbReference type="PANTHER" id="PTHR10173">
    <property type="entry name" value="METHIONINE SULFOXIDE REDUCTASE"/>
    <property type="match status" value="1"/>
</dbReference>
<dbReference type="PANTHER" id="PTHR10173:SF52">
    <property type="entry name" value="METHIONINE-R-SULFOXIDE REDUCTASE B1"/>
    <property type="match status" value="1"/>
</dbReference>
<dbReference type="Pfam" id="PF01641">
    <property type="entry name" value="SelR"/>
    <property type="match status" value="1"/>
</dbReference>
<dbReference type="SUPFAM" id="SSF51316">
    <property type="entry name" value="Mss4-like"/>
    <property type="match status" value="1"/>
</dbReference>
<dbReference type="PROSITE" id="PS51790">
    <property type="entry name" value="MSRB"/>
    <property type="match status" value="1"/>
</dbReference>
<proteinExistence type="inferred from homology"/>
<name>MSRB_AZOVD</name>